<reference key="1">
    <citation type="journal article" date="2004" name="J. Infect. Dis.">
        <title>Progress toward characterization of the group A Streptococcus metagenome: complete genome sequence of a macrolide-resistant serotype M6 strain.</title>
        <authorList>
            <person name="Banks D.J."/>
            <person name="Porcella S.F."/>
            <person name="Barbian K.D."/>
            <person name="Beres S.B."/>
            <person name="Philips L.E."/>
            <person name="Voyich J.M."/>
            <person name="DeLeo F.R."/>
            <person name="Martin J.M."/>
            <person name="Somerville G.A."/>
            <person name="Musser J.M."/>
        </authorList>
    </citation>
    <scope>NUCLEOTIDE SEQUENCE [LARGE SCALE GENOMIC DNA]</scope>
    <source>
        <strain>ATCC BAA-946 / MGAS10394</strain>
    </source>
</reference>
<organism>
    <name type="scientific">Streptococcus pyogenes serotype M6 (strain ATCC BAA-946 / MGAS10394)</name>
    <dbReference type="NCBI Taxonomy" id="286636"/>
    <lineage>
        <taxon>Bacteria</taxon>
        <taxon>Bacillati</taxon>
        <taxon>Bacillota</taxon>
        <taxon>Bacilli</taxon>
        <taxon>Lactobacillales</taxon>
        <taxon>Streptococcaceae</taxon>
        <taxon>Streptococcus</taxon>
    </lineage>
</organism>
<sequence length="442" mass="49597">MSKTYHFIGIKGSGMSALALMLHQMGHMVQGSDVEKYYFTQRGLEQAGITILPFSEDNITPDMELIVGNAFRENNKEVAYALRHQIPFKRYHDFLGDFMKSFISFAVAGAHGKTSTTGLLSHVLKNITDTSYLIGDGTGRGSANAQYFVFESDEYERHFMPYHPEYSIITNIDFDHPDYFTGIADVRNAFNDYAKQVKKALFVYGEDDELKKIEAPAPIYYYGFEEGNDFIAYDITRTTNGSDFKVKHQGEVIGQFHVPAYGKHNILNATAVIANLFVAGIDMALVADHLKTFSGVKRRFTEKIINDTIIIDDFAHHPTEIVATIDAARQKYPSKEIVAIFQPHTFTRTIALLEDFACALNEADSVYLAQIYGSAREVDKGEVKVEDLAAKIIKPSQVVTVENVSPLLDHDNAVYVFMGAGDIQLYEHSFEELLANLTKNNQ</sequence>
<comment type="function">
    <text evidence="1">Cell wall formation.</text>
</comment>
<comment type="catalytic activity">
    <reaction evidence="1">
        <text>UDP-N-acetyl-alpha-D-muramate + L-alanine + ATP = UDP-N-acetyl-alpha-D-muramoyl-L-alanine + ADP + phosphate + H(+)</text>
        <dbReference type="Rhea" id="RHEA:23372"/>
        <dbReference type="ChEBI" id="CHEBI:15378"/>
        <dbReference type="ChEBI" id="CHEBI:30616"/>
        <dbReference type="ChEBI" id="CHEBI:43474"/>
        <dbReference type="ChEBI" id="CHEBI:57972"/>
        <dbReference type="ChEBI" id="CHEBI:70757"/>
        <dbReference type="ChEBI" id="CHEBI:83898"/>
        <dbReference type="ChEBI" id="CHEBI:456216"/>
        <dbReference type="EC" id="6.3.2.8"/>
    </reaction>
</comment>
<comment type="pathway">
    <text evidence="1">Cell wall biogenesis; peptidoglycan biosynthesis.</text>
</comment>
<comment type="subcellular location">
    <subcellularLocation>
        <location evidence="1">Cytoplasm</location>
    </subcellularLocation>
</comment>
<comment type="similarity">
    <text evidence="1">Belongs to the MurCDEF family.</text>
</comment>
<proteinExistence type="inferred from homology"/>
<feature type="chain" id="PRO_0000182170" description="UDP-N-acetylmuramate--L-alanine ligase">
    <location>
        <begin position="1"/>
        <end position="442"/>
    </location>
</feature>
<feature type="binding site" evidence="1">
    <location>
        <begin position="109"/>
        <end position="115"/>
    </location>
    <ligand>
        <name>ATP</name>
        <dbReference type="ChEBI" id="CHEBI:30616"/>
    </ligand>
</feature>
<keyword id="KW-0067">ATP-binding</keyword>
<keyword id="KW-0131">Cell cycle</keyword>
<keyword id="KW-0132">Cell division</keyword>
<keyword id="KW-0133">Cell shape</keyword>
<keyword id="KW-0961">Cell wall biogenesis/degradation</keyword>
<keyword id="KW-0963">Cytoplasm</keyword>
<keyword id="KW-0436">Ligase</keyword>
<keyword id="KW-0547">Nucleotide-binding</keyword>
<keyword id="KW-0573">Peptidoglycan synthesis</keyword>
<accession>Q5XDR0</accession>
<name>MURC_STRP6</name>
<dbReference type="EC" id="6.3.2.8" evidence="1"/>
<dbReference type="EMBL" id="CP000003">
    <property type="protein sequence ID" value="AAT86453.1"/>
    <property type="molecule type" value="Genomic_DNA"/>
</dbReference>
<dbReference type="RefSeq" id="WP_011184193.1">
    <property type="nucleotide sequence ID" value="NC_006086.1"/>
</dbReference>
<dbReference type="SMR" id="Q5XDR0"/>
<dbReference type="KEGG" id="spa:M6_Spy0318"/>
<dbReference type="HOGENOM" id="CLU_028104_1_0_9"/>
<dbReference type="UniPathway" id="UPA00219"/>
<dbReference type="Proteomes" id="UP000001167">
    <property type="component" value="Chromosome"/>
</dbReference>
<dbReference type="GO" id="GO:0005737">
    <property type="term" value="C:cytoplasm"/>
    <property type="evidence" value="ECO:0007669"/>
    <property type="project" value="UniProtKB-SubCell"/>
</dbReference>
<dbReference type="GO" id="GO:0005524">
    <property type="term" value="F:ATP binding"/>
    <property type="evidence" value="ECO:0007669"/>
    <property type="project" value="UniProtKB-UniRule"/>
</dbReference>
<dbReference type="GO" id="GO:0008763">
    <property type="term" value="F:UDP-N-acetylmuramate-L-alanine ligase activity"/>
    <property type="evidence" value="ECO:0007669"/>
    <property type="project" value="UniProtKB-UniRule"/>
</dbReference>
<dbReference type="GO" id="GO:0051301">
    <property type="term" value="P:cell division"/>
    <property type="evidence" value="ECO:0007669"/>
    <property type="project" value="UniProtKB-KW"/>
</dbReference>
<dbReference type="GO" id="GO:0071555">
    <property type="term" value="P:cell wall organization"/>
    <property type="evidence" value="ECO:0007669"/>
    <property type="project" value="UniProtKB-KW"/>
</dbReference>
<dbReference type="GO" id="GO:0009252">
    <property type="term" value="P:peptidoglycan biosynthetic process"/>
    <property type="evidence" value="ECO:0007669"/>
    <property type="project" value="UniProtKB-UniRule"/>
</dbReference>
<dbReference type="GO" id="GO:0008360">
    <property type="term" value="P:regulation of cell shape"/>
    <property type="evidence" value="ECO:0007669"/>
    <property type="project" value="UniProtKB-KW"/>
</dbReference>
<dbReference type="Gene3D" id="3.90.190.20">
    <property type="entry name" value="Mur ligase, C-terminal domain"/>
    <property type="match status" value="1"/>
</dbReference>
<dbReference type="Gene3D" id="3.40.1190.10">
    <property type="entry name" value="Mur-like, catalytic domain"/>
    <property type="match status" value="1"/>
</dbReference>
<dbReference type="Gene3D" id="3.40.50.720">
    <property type="entry name" value="NAD(P)-binding Rossmann-like Domain"/>
    <property type="match status" value="1"/>
</dbReference>
<dbReference type="HAMAP" id="MF_00046">
    <property type="entry name" value="MurC"/>
    <property type="match status" value="1"/>
</dbReference>
<dbReference type="InterPro" id="IPR036565">
    <property type="entry name" value="Mur-like_cat_sf"/>
</dbReference>
<dbReference type="InterPro" id="IPR004101">
    <property type="entry name" value="Mur_ligase_C"/>
</dbReference>
<dbReference type="InterPro" id="IPR036615">
    <property type="entry name" value="Mur_ligase_C_dom_sf"/>
</dbReference>
<dbReference type="InterPro" id="IPR013221">
    <property type="entry name" value="Mur_ligase_cen"/>
</dbReference>
<dbReference type="InterPro" id="IPR000713">
    <property type="entry name" value="Mur_ligase_N"/>
</dbReference>
<dbReference type="InterPro" id="IPR050061">
    <property type="entry name" value="MurCDEF_pg_biosynth"/>
</dbReference>
<dbReference type="InterPro" id="IPR005758">
    <property type="entry name" value="UDP-N-AcMur_Ala_ligase_MurC"/>
</dbReference>
<dbReference type="NCBIfam" id="TIGR01082">
    <property type="entry name" value="murC"/>
    <property type="match status" value="1"/>
</dbReference>
<dbReference type="PANTHER" id="PTHR43445:SF3">
    <property type="entry name" value="UDP-N-ACETYLMURAMATE--L-ALANINE LIGASE"/>
    <property type="match status" value="1"/>
</dbReference>
<dbReference type="PANTHER" id="PTHR43445">
    <property type="entry name" value="UDP-N-ACETYLMURAMATE--L-ALANINE LIGASE-RELATED"/>
    <property type="match status" value="1"/>
</dbReference>
<dbReference type="Pfam" id="PF01225">
    <property type="entry name" value="Mur_ligase"/>
    <property type="match status" value="1"/>
</dbReference>
<dbReference type="Pfam" id="PF02875">
    <property type="entry name" value="Mur_ligase_C"/>
    <property type="match status" value="1"/>
</dbReference>
<dbReference type="Pfam" id="PF08245">
    <property type="entry name" value="Mur_ligase_M"/>
    <property type="match status" value="1"/>
</dbReference>
<dbReference type="SUPFAM" id="SSF51984">
    <property type="entry name" value="MurCD N-terminal domain"/>
    <property type="match status" value="1"/>
</dbReference>
<dbReference type="SUPFAM" id="SSF53623">
    <property type="entry name" value="MurD-like peptide ligases, catalytic domain"/>
    <property type="match status" value="1"/>
</dbReference>
<dbReference type="SUPFAM" id="SSF53244">
    <property type="entry name" value="MurD-like peptide ligases, peptide-binding domain"/>
    <property type="match status" value="1"/>
</dbReference>
<protein>
    <recommendedName>
        <fullName evidence="1">UDP-N-acetylmuramate--L-alanine ligase</fullName>
        <ecNumber evidence="1">6.3.2.8</ecNumber>
    </recommendedName>
    <alternativeName>
        <fullName evidence="1">UDP-N-acetylmuramoyl-L-alanine synthetase</fullName>
    </alternativeName>
</protein>
<evidence type="ECO:0000255" key="1">
    <source>
        <dbReference type="HAMAP-Rule" id="MF_00046"/>
    </source>
</evidence>
<gene>
    <name evidence="1" type="primary">murC</name>
    <name type="ordered locus">M6_Spy0318</name>
</gene>